<name>LSRA_YERPB</name>
<dbReference type="EC" id="7.6.2.13" evidence="1"/>
<dbReference type="EMBL" id="CP001048">
    <property type="protein sequence ID" value="ACC87560.1"/>
    <property type="molecule type" value="Genomic_DNA"/>
</dbReference>
<dbReference type="RefSeq" id="WP_011191665.1">
    <property type="nucleotide sequence ID" value="NZ_CP009780.1"/>
</dbReference>
<dbReference type="SMR" id="B2K3G1"/>
<dbReference type="KEGG" id="ypb:YPTS_0576"/>
<dbReference type="PATRIC" id="fig|502801.10.peg.4252"/>
<dbReference type="GO" id="GO:0005886">
    <property type="term" value="C:plasma membrane"/>
    <property type="evidence" value="ECO:0007669"/>
    <property type="project" value="UniProtKB-SubCell"/>
</dbReference>
<dbReference type="GO" id="GO:0005524">
    <property type="term" value="F:ATP binding"/>
    <property type="evidence" value="ECO:0007669"/>
    <property type="project" value="UniProtKB-KW"/>
</dbReference>
<dbReference type="GO" id="GO:0016887">
    <property type="term" value="F:ATP hydrolysis activity"/>
    <property type="evidence" value="ECO:0007669"/>
    <property type="project" value="InterPro"/>
</dbReference>
<dbReference type="CDD" id="cd03216">
    <property type="entry name" value="ABC_Carb_Monos_I"/>
    <property type="match status" value="1"/>
</dbReference>
<dbReference type="CDD" id="cd03215">
    <property type="entry name" value="ABC_Carb_Monos_II"/>
    <property type="match status" value="1"/>
</dbReference>
<dbReference type="Gene3D" id="3.40.50.300">
    <property type="entry name" value="P-loop containing nucleotide triphosphate hydrolases"/>
    <property type="match status" value="2"/>
</dbReference>
<dbReference type="InterPro" id="IPR003593">
    <property type="entry name" value="AAA+_ATPase"/>
</dbReference>
<dbReference type="InterPro" id="IPR050107">
    <property type="entry name" value="ABC_carbohydrate_import_ATPase"/>
</dbReference>
<dbReference type="InterPro" id="IPR003439">
    <property type="entry name" value="ABC_transporter-like_ATP-bd"/>
</dbReference>
<dbReference type="InterPro" id="IPR017871">
    <property type="entry name" value="ABC_transporter-like_CS"/>
</dbReference>
<dbReference type="InterPro" id="IPR027417">
    <property type="entry name" value="P-loop_NTPase"/>
</dbReference>
<dbReference type="NCBIfam" id="NF011967">
    <property type="entry name" value="PRK15439.1"/>
    <property type="match status" value="1"/>
</dbReference>
<dbReference type="PANTHER" id="PTHR43790:SF2">
    <property type="entry name" value="AUTOINDUCER 2 IMPORT ATP-BINDING PROTEIN LSRA"/>
    <property type="match status" value="1"/>
</dbReference>
<dbReference type="PANTHER" id="PTHR43790">
    <property type="entry name" value="CARBOHYDRATE TRANSPORT ATP-BINDING PROTEIN MG119-RELATED"/>
    <property type="match status" value="1"/>
</dbReference>
<dbReference type="Pfam" id="PF00005">
    <property type="entry name" value="ABC_tran"/>
    <property type="match status" value="2"/>
</dbReference>
<dbReference type="SMART" id="SM00382">
    <property type="entry name" value="AAA"/>
    <property type="match status" value="2"/>
</dbReference>
<dbReference type="SUPFAM" id="SSF52540">
    <property type="entry name" value="P-loop containing nucleoside triphosphate hydrolases"/>
    <property type="match status" value="2"/>
</dbReference>
<dbReference type="PROSITE" id="PS00211">
    <property type="entry name" value="ABC_TRANSPORTER_1"/>
    <property type="match status" value="1"/>
</dbReference>
<dbReference type="PROSITE" id="PS50893">
    <property type="entry name" value="ABC_TRANSPORTER_2"/>
    <property type="match status" value="2"/>
</dbReference>
<sequence>MPHTVATPPPLLQVRGISKQFSGVVVLKSIDFTLQPGQVHALLGGNGAGKSTLMKIIAGILPPDTGVIEMNGQPCFNLTPAKAHQLGIYLVPQEPMLFANLSVQENILFRLPKHQADKKKMAQLLKNLGCHLDLSVSAGSLEVADQQLVEIMRGLMRDSRILILDEPTASLTPAETHRLFSQIRMLLQQGVGVVFISHKLPEIRQLADWVSVMRDGGIALSGSTADFSTEDMIQAMTPEAQKGALTDSQKLWLELPGNRRAQSRAQSQQPVIHVHDLSGEGFAHISFHVQAGEILGLAGVVGAGRTELAETLYGLRPASTGNVILEEVNITAMKTANRLAAGLVYLPEDRQASGLYLDAPLSWNVCALAHDRQGLWTQPAQEAAVLERYRRALNIKFSHLEQPVRTLSGGNQQKLLIAKCLEANPLLLIIDEPTRGVDVSARSDIYQLIRSIAEQQVAIIFISSDLEEVVQMADRVLVMHQGEINGALSGAAMNVDTIMHMAFGEHRSVSEPQSGTASSAENKGTSC</sequence>
<accession>B2K3G1</accession>
<comment type="function">
    <text evidence="1">Part of the ABC transporter complex LsrABCD involved in autoinducer 2 (AI-2) import. Responsible for energy coupling to the transport system.</text>
</comment>
<comment type="catalytic activity">
    <reaction evidence="1">
        <text>ATP + H2O + (2R,4S)-2-methyl-2,3,3,4-tetrahydroxytetrahydrofuran-[AI-2-binding protein]Side 1 = ADP + phosphate + (2R,4S)-2-methyl-2,3,3,4-tetrahydroxytetrahydrofuranSide 2 + [AI-2-binding protein]Side 1.</text>
        <dbReference type="EC" id="7.6.2.13"/>
    </reaction>
</comment>
<comment type="subunit">
    <text evidence="1">The complex is composed of two ATP-binding proteins (LsrA), two transmembrane proteins (LsrC and LsrD) and a solute-binding protein (LsrB).</text>
</comment>
<comment type="subcellular location">
    <subcellularLocation>
        <location evidence="1">Cell inner membrane</location>
        <topology evidence="1">Peripheral membrane protein</topology>
    </subcellularLocation>
</comment>
<comment type="similarity">
    <text evidence="4">Belongs to the ABC transporter superfamily. AI-2 autoinducer porter (TC 3.A.1.2.8) family.</text>
</comment>
<reference key="1">
    <citation type="submission" date="2008-04" db="EMBL/GenBank/DDBJ databases">
        <title>Complete sequence of Yersinia pseudotuberculosis PB1/+.</title>
        <authorList>
            <person name="Copeland A."/>
            <person name="Lucas S."/>
            <person name="Lapidus A."/>
            <person name="Glavina del Rio T."/>
            <person name="Dalin E."/>
            <person name="Tice H."/>
            <person name="Bruce D."/>
            <person name="Goodwin L."/>
            <person name="Pitluck S."/>
            <person name="Munk A.C."/>
            <person name="Brettin T."/>
            <person name="Detter J.C."/>
            <person name="Han C."/>
            <person name="Tapia R."/>
            <person name="Schmutz J."/>
            <person name="Larimer F."/>
            <person name="Land M."/>
            <person name="Hauser L."/>
            <person name="Challacombe J.F."/>
            <person name="Green L."/>
            <person name="Lindler L.E."/>
            <person name="Nikolich M.P."/>
            <person name="Richardson P."/>
        </authorList>
    </citation>
    <scope>NUCLEOTIDE SEQUENCE [LARGE SCALE GENOMIC DNA]</scope>
    <source>
        <strain>PB1/+</strain>
    </source>
</reference>
<gene>
    <name type="primary">lsrA</name>
    <name type="ordered locus">YPTS_0576</name>
</gene>
<keyword id="KW-0067">ATP-binding</keyword>
<keyword id="KW-0997">Cell inner membrane</keyword>
<keyword id="KW-1003">Cell membrane</keyword>
<keyword id="KW-0472">Membrane</keyword>
<keyword id="KW-0547">Nucleotide-binding</keyword>
<keyword id="KW-0677">Repeat</keyword>
<keyword id="KW-1278">Translocase</keyword>
<keyword id="KW-0813">Transport</keyword>
<protein>
    <recommendedName>
        <fullName evidence="1">Autoinducer 2 import ATP-binding protein LsrA</fullName>
        <shortName evidence="1">AI-2 import ATP-binding protein LsrA</shortName>
        <ecNumber evidence="1">7.6.2.13</ecNumber>
    </recommendedName>
</protein>
<proteinExistence type="inferred from homology"/>
<evidence type="ECO:0000250" key="1">
    <source>
        <dbReference type="UniProtKB" id="P77257"/>
    </source>
</evidence>
<evidence type="ECO:0000255" key="2">
    <source>
        <dbReference type="PROSITE-ProRule" id="PRU00434"/>
    </source>
</evidence>
<evidence type="ECO:0000256" key="3">
    <source>
        <dbReference type="SAM" id="MobiDB-lite"/>
    </source>
</evidence>
<evidence type="ECO:0000305" key="4"/>
<feature type="chain" id="PRO_0000351314" description="Autoinducer 2 import ATP-binding protein LsrA">
    <location>
        <begin position="1"/>
        <end position="527"/>
    </location>
</feature>
<feature type="domain" description="ABC transporter 1" evidence="2">
    <location>
        <begin position="12"/>
        <end position="240"/>
    </location>
</feature>
<feature type="domain" description="ABC transporter 2" evidence="2">
    <location>
        <begin position="266"/>
        <end position="506"/>
    </location>
</feature>
<feature type="region of interest" description="Disordered" evidence="3">
    <location>
        <begin position="507"/>
        <end position="527"/>
    </location>
</feature>
<feature type="compositionally biased region" description="Polar residues" evidence="3">
    <location>
        <begin position="510"/>
        <end position="527"/>
    </location>
</feature>
<feature type="binding site" evidence="2">
    <location>
        <begin position="44"/>
        <end position="51"/>
    </location>
    <ligand>
        <name>ATP</name>
        <dbReference type="ChEBI" id="CHEBI:30616"/>
    </ligand>
</feature>
<organism>
    <name type="scientific">Yersinia pseudotuberculosis serotype IB (strain PB1/+)</name>
    <dbReference type="NCBI Taxonomy" id="502801"/>
    <lineage>
        <taxon>Bacteria</taxon>
        <taxon>Pseudomonadati</taxon>
        <taxon>Pseudomonadota</taxon>
        <taxon>Gammaproteobacteria</taxon>
        <taxon>Enterobacterales</taxon>
        <taxon>Yersiniaceae</taxon>
        <taxon>Yersinia</taxon>
    </lineage>
</organism>